<feature type="signal peptide" evidence="1">
    <location>
        <begin position="1"/>
        <end position="21"/>
    </location>
</feature>
<feature type="chain" id="PRO_0000259101" description="Tol-Pal system protein TolB" evidence="1">
    <location>
        <begin position="22"/>
        <end position="430"/>
    </location>
</feature>
<proteinExistence type="inferred from homology"/>
<accession>Q1CFM9</accession>
<accession>C4GWP7</accession>
<evidence type="ECO:0000255" key="1">
    <source>
        <dbReference type="HAMAP-Rule" id="MF_00671"/>
    </source>
</evidence>
<name>TOLB_YERPN</name>
<organism>
    <name type="scientific">Yersinia pestis bv. Antiqua (strain Nepal516)</name>
    <dbReference type="NCBI Taxonomy" id="377628"/>
    <lineage>
        <taxon>Bacteria</taxon>
        <taxon>Pseudomonadati</taxon>
        <taxon>Pseudomonadota</taxon>
        <taxon>Gammaproteobacteria</taxon>
        <taxon>Enterobacterales</taxon>
        <taxon>Yersiniaceae</taxon>
        <taxon>Yersinia</taxon>
    </lineage>
</organism>
<reference key="1">
    <citation type="journal article" date="2006" name="J. Bacteriol.">
        <title>Complete genome sequence of Yersinia pestis strains Antiqua and Nepal516: evidence of gene reduction in an emerging pathogen.</title>
        <authorList>
            <person name="Chain P.S.G."/>
            <person name="Hu P."/>
            <person name="Malfatti S.A."/>
            <person name="Radnedge L."/>
            <person name="Larimer F."/>
            <person name="Vergez L.M."/>
            <person name="Worsham P."/>
            <person name="Chu M.C."/>
            <person name="Andersen G.L."/>
        </authorList>
    </citation>
    <scope>NUCLEOTIDE SEQUENCE [LARGE SCALE GENOMIC DNA]</scope>
    <source>
        <strain>Nepal516</strain>
    </source>
</reference>
<reference key="2">
    <citation type="submission" date="2009-04" db="EMBL/GenBank/DDBJ databases">
        <title>Yersinia pestis Nepal516A whole genome shotgun sequencing project.</title>
        <authorList>
            <person name="Plunkett G. III"/>
            <person name="Anderson B.D."/>
            <person name="Baumler D.J."/>
            <person name="Burland V."/>
            <person name="Cabot E.L."/>
            <person name="Glasner J.D."/>
            <person name="Mau B."/>
            <person name="Neeno-Eckwall E."/>
            <person name="Perna N.T."/>
            <person name="Munk A.C."/>
            <person name="Tapia R."/>
            <person name="Green L.D."/>
            <person name="Rogers Y.C."/>
            <person name="Detter J.C."/>
            <person name="Bruce D.C."/>
            <person name="Brettin T.S."/>
        </authorList>
    </citation>
    <scope>NUCLEOTIDE SEQUENCE [LARGE SCALE GENOMIC DNA]</scope>
    <source>
        <strain>Nepal516</strain>
    </source>
</reference>
<dbReference type="EMBL" id="CP000305">
    <property type="protein sequence ID" value="ABG19201.1"/>
    <property type="molecule type" value="Genomic_DNA"/>
</dbReference>
<dbReference type="EMBL" id="ACNQ01000017">
    <property type="protein sequence ID" value="EEO75347.1"/>
    <property type="molecule type" value="Genomic_DNA"/>
</dbReference>
<dbReference type="RefSeq" id="WP_002210738.1">
    <property type="nucleotide sequence ID" value="NZ_ACNQ01000017.1"/>
</dbReference>
<dbReference type="SMR" id="Q1CFM9"/>
<dbReference type="GeneID" id="57977261"/>
<dbReference type="KEGG" id="ypn:YPN_2874"/>
<dbReference type="HOGENOM" id="CLU_047123_0_0_6"/>
<dbReference type="Proteomes" id="UP000008936">
    <property type="component" value="Chromosome"/>
</dbReference>
<dbReference type="GO" id="GO:0042597">
    <property type="term" value="C:periplasmic space"/>
    <property type="evidence" value="ECO:0007669"/>
    <property type="project" value="UniProtKB-SubCell"/>
</dbReference>
<dbReference type="GO" id="GO:0051301">
    <property type="term" value="P:cell division"/>
    <property type="evidence" value="ECO:0007669"/>
    <property type="project" value="UniProtKB-UniRule"/>
</dbReference>
<dbReference type="GO" id="GO:0017038">
    <property type="term" value="P:protein import"/>
    <property type="evidence" value="ECO:0007669"/>
    <property type="project" value="InterPro"/>
</dbReference>
<dbReference type="FunFam" id="2.120.10.30:FF:000022">
    <property type="entry name" value="Tol-Pal system protein TolB"/>
    <property type="match status" value="1"/>
</dbReference>
<dbReference type="Gene3D" id="2.120.10.30">
    <property type="entry name" value="TolB, C-terminal domain"/>
    <property type="match status" value="1"/>
</dbReference>
<dbReference type="Gene3D" id="3.40.50.10070">
    <property type="entry name" value="TolB, N-terminal domain"/>
    <property type="match status" value="1"/>
</dbReference>
<dbReference type="HAMAP" id="MF_00671">
    <property type="entry name" value="TolB"/>
    <property type="match status" value="1"/>
</dbReference>
<dbReference type="InterPro" id="IPR011042">
    <property type="entry name" value="6-blade_b-propeller_TolB-like"/>
</dbReference>
<dbReference type="InterPro" id="IPR011659">
    <property type="entry name" value="PD40"/>
</dbReference>
<dbReference type="InterPro" id="IPR014167">
    <property type="entry name" value="Tol-Pal_TolB"/>
</dbReference>
<dbReference type="InterPro" id="IPR007195">
    <property type="entry name" value="TolB_N"/>
</dbReference>
<dbReference type="NCBIfam" id="TIGR02800">
    <property type="entry name" value="propeller_TolB"/>
    <property type="match status" value="1"/>
</dbReference>
<dbReference type="PANTHER" id="PTHR36842:SF1">
    <property type="entry name" value="PROTEIN TOLB"/>
    <property type="match status" value="1"/>
</dbReference>
<dbReference type="PANTHER" id="PTHR36842">
    <property type="entry name" value="PROTEIN TOLB HOMOLOG"/>
    <property type="match status" value="1"/>
</dbReference>
<dbReference type="Pfam" id="PF07676">
    <property type="entry name" value="PD40"/>
    <property type="match status" value="4"/>
</dbReference>
<dbReference type="Pfam" id="PF04052">
    <property type="entry name" value="TolB_N"/>
    <property type="match status" value="1"/>
</dbReference>
<dbReference type="SUPFAM" id="SSF52964">
    <property type="entry name" value="TolB, N-terminal domain"/>
    <property type="match status" value="1"/>
</dbReference>
<dbReference type="SUPFAM" id="SSF69304">
    <property type="entry name" value="Tricorn protease N-terminal domain"/>
    <property type="match status" value="1"/>
</dbReference>
<protein>
    <recommendedName>
        <fullName evidence="1">Tol-Pal system protein TolB</fullName>
    </recommendedName>
</protein>
<keyword id="KW-0131">Cell cycle</keyword>
<keyword id="KW-0132">Cell division</keyword>
<keyword id="KW-0574">Periplasm</keyword>
<keyword id="KW-0732">Signal</keyword>
<sequence length="430" mass="46045">MKQAFRVALGFLVLWASVLHAEVRIEITQGVDSARPIGVVPFKWMGPGTPPEEIGAIVGADLRNSGKFNPIDAARMPQQPSTAAEVTPAAWTALGIDAVVVGQVQPSADGSYVVSYQLVDTSGSAGSILAQNQYKVTKQWLRYSAHTVSDEVFEKLTGIKGAFRTRIAYVVKTNGGKFPHELRVSDYDGYNQFVVHRSPEPLMSPAWSPDGSKIAYVTFESGKSALVIQTLANGAIRQVASFPRHNGAPAFSPDGTKLAFALSKSGSLNLYVMDLASGQISQVTDGRSNNTEPSWFPDSQNLAYTSDQGGRPQVYKVNINGGVPQRITWEGSQNQNADVSPDGKFLVLVSSNGGAQHIAKQDLETGAVQVLTDTLLDETPSIAPNGTMVIYSSTQGLGSVLQLVSTDGRFKARLPATDGQVKFPAWSPYL</sequence>
<comment type="function">
    <text evidence="1">Part of the Tol-Pal system, which plays a role in outer membrane invagination during cell division and is important for maintaining outer membrane integrity. TolB occupies a key intermediary position in the Tol-Pal system because it communicates directly with both membrane-embedded components, Pal in the outer membrane and TolA in the inner membrane.</text>
</comment>
<comment type="subunit">
    <text evidence="1">The Tol-Pal system is composed of five core proteins: the inner membrane proteins TolA, TolQ and TolR, the periplasmic protein TolB and the outer membrane protein Pal. They form a network linking the inner and outer membranes and the peptidoglycan layer.</text>
</comment>
<comment type="subcellular location">
    <subcellularLocation>
        <location evidence="1">Periplasm</location>
    </subcellularLocation>
</comment>
<comment type="similarity">
    <text evidence="1">Belongs to the TolB family.</text>
</comment>
<gene>
    <name evidence="1" type="primary">tolB</name>
    <name type="ordered locus">YPN_2874</name>
    <name type="ORF">YP516_3252</name>
</gene>